<gene>
    <name evidence="1" type="primary">ruvC</name>
    <name type="ordered locus">YPO2056</name>
    <name type="ordered locus">y2254</name>
    <name type="ordered locus">YP_1899</name>
</gene>
<proteinExistence type="inferred from homology"/>
<accession>Q8ZEU7</accession>
<accession>Q0WFA0</accession>
<name>RUVC_YERPE</name>
<protein>
    <recommendedName>
        <fullName evidence="1">Crossover junction endodeoxyribonuclease RuvC</fullName>
        <ecNumber evidence="1">3.1.21.10</ecNumber>
    </recommendedName>
    <alternativeName>
        <fullName evidence="1">Holliday junction nuclease RuvC</fullName>
    </alternativeName>
    <alternativeName>
        <fullName evidence="1">Holliday junction resolvase RuvC</fullName>
    </alternativeName>
</protein>
<keyword id="KW-0963">Cytoplasm</keyword>
<keyword id="KW-0227">DNA damage</keyword>
<keyword id="KW-0233">DNA recombination</keyword>
<keyword id="KW-0234">DNA repair</keyword>
<keyword id="KW-0238">DNA-binding</keyword>
<keyword id="KW-0255">Endonuclease</keyword>
<keyword id="KW-0378">Hydrolase</keyword>
<keyword id="KW-0460">Magnesium</keyword>
<keyword id="KW-0479">Metal-binding</keyword>
<keyword id="KW-0540">Nuclease</keyword>
<keyword id="KW-1185">Reference proteome</keyword>
<dbReference type="EC" id="3.1.21.10" evidence="1"/>
<dbReference type="EMBL" id="AL590842">
    <property type="protein sequence ID" value="CAL20691.1"/>
    <property type="molecule type" value="Genomic_DNA"/>
</dbReference>
<dbReference type="EMBL" id="AE009952">
    <property type="protein sequence ID" value="AAM85814.1"/>
    <property type="molecule type" value="Genomic_DNA"/>
</dbReference>
<dbReference type="EMBL" id="AE017042">
    <property type="protein sequence ID" value="AAS62117.1"/>
    <property type="molecule type" value="Genomic_DNA"/>
</dbReference>
<dbReference type="PIR" id="AH0250">
    <property type="entry name" value="AH0250"/>
</dbReference>
<dbReference type="RefSeq" id="WP_002211201.1">
    <property type="nucleotide sequence ID" value="NZ_WUCM01000062.1"/>
</dbReference>
<dbReference type="RefSeq" id="YP_002347038.1">
    <property type="nucleotide sequence ID" value="NC_003143.1"/>
</dbReference>
<dbReference type="SMR" id="Q8ZEU7"/>
<dbReference type="STRING" id="214092.YPO2056"/>
<dbReference type="PaxDb" id="214092-YPO2056"/>
<dbReference type="DNASU" id="1147201"/>
<dbReference type="EnsemblBacteria" id="AAS62117">
    <property type="protein sequence ID" value="AAS62117"/>
    <property type="gene ID" value="YP_1899"/>
</dbReference>
<dbReference type="GeneID" id="57976605"/>
<dbReference type="KEGG" id="ype:YPO2056"/>
<dbReference type="KEGG" id="ypk:y2254"/>
<dbReference type="KEGG" id="ypm:YP_1899"/>
<dbReference type="PATRIC" id="fig|214092.21.peg.2443"/>
<dbReference type="eggNOG" id="COG0817">
    <property type="taxonomic scope" value="Bacteria"/>
</dbReference>
<dbReference type="HOGENOM" id="CLU_091257_2_1_6"/>
<dbReference type="OMA" id="AICHIWR"/>
<dbReference type="OrthoDB" id="9805499at2"/>
<dbReference type="Proteomes" id="UP000000815">
    <property type="component" value="Chromosome"/>
</dbReference>
<dbReference type="Proteomes" id="UP000001019">
    <property type="component" value="Chromosome"/>
</dbReference>
<dbReference type="Proteomes" id="UP000002490">
    <property type="component" value="Chromosome"/>
</dbReference>
<dbReference type="GO" id="GO:0005737">
    <property type="term" value="C:cytoplasm"/>
    <property type="evidence" value="ECO:0007669"/>
    <property type="project" value="UniProtKB-SubCell"/>
</dbReference>
<dbReference type="GO" id="GO:0048476">
    <property type="term" value="C:Holliday junction resolvase complex"/>
    <property type="evidence" value="ECO:0007669"/>
    <property type="project" value="UniProtKB-UniRule"/>
</dbReference>
<dbReference type="GO" id="GO:0008821">
    <property type="term" value="F:crossover junction DNA endonuclease activity"/>
    <property type="evidence" value="ECO:0007669"/>
    <property type="project" value="UniProtKB-UniRule"/>
</dbReference>
<dbReference type="GO" id="GO:0003677">
    <property type="term" value="F:DNA binding"/>
    <property type="evidence" value="ECO:0007669"/>
    <property type="project" value="UniProtKB-KW"/>
</dbReference>
<dbReference type="GO" id="GO:0000287">
    <property type="term" value="F:magnesium ion binding"/>
    <property type="evidence" value="ECO:0007669"/>
    <property type="project" value="UniProtKB-UniRule"/>
</dbReference>
<dbReference type="GO" id="GO:0006310">
    <property type="term" value="P:DNA recombination"/>
    <property type="evidence" value="ECO:0007669"/>
    <property type="project" value="UniProtKB-UniRule"/>
</dbReference>
<dbReference type="GO" id="GO:0006281">
    <property type="term" value="P:DNA repair"/>
    <property type="evidence" value="ECO:0007669"/>
    <property type="project" value="UniProtKB-UniRule"/>
</dbReference>
<dbReference type="CDD" id="cd16962">
    <property type="entry name" value="RuvC"/>
    <property type="match status" value="1"/>
</dbReference>
<dbReference type="FunFam" id="3.30.420.10:FF:000002">
    <property type="entry name" value="Crossover junction endodeoxyribonuclease RuvC"/>
    <property type="match status" value="1"/>
</dbReference>
<dbReference type="Gene3D" id="3.30.420.10">
    <property type="entry name" value="Ribonuclease H-like superfamily/Ribonuclease H"/>
    <property type="match status" value="1"/>
</dbReference>
<dbReference type="HAMAP" id="MF_00034">
    <property type="entry name" value="RuvC"/>
    <property type="match status" value="1"/>
</dbReference>
<dbReference type="InterPro" id="IPR012337">
    <property type="entry name" value="RNaseH-like_sf"/>
</dbReference>
<dbReference type="InterPro" id="IPR036397">
    <property type="entry name" value="RNaseH_sf"/>
</dbReference>
<dbReference type="InterPro" id="IPR020563">
    <property type="entry name" value="X-over_junc_endoDNase_Mg_BS"/>
</dbReference>
<dbReference type="InterPro" id="IPR002176">
    <property type="entry name" value="X-over_junc_endoDNase_RuvC"/>
</dbReference>
<dbReference type="NCBIfam" id="TIGR00228">
    <property type="entry name" value="ruvC"/>
    <property type="match status" value="1"/>
</dbReference>
<dbReference type="PANTHER" id="PTHR30194">
    <property type="entry name" value="CROSSOVER JUNCTION ENDODEOXYRIBONUCLEASE RUVC"/>
    <property type="match status" value="1"/>
</dbReference>
<dbReference type="PANTHER" id="PTHR30194:SF3">
    <property type="entry name" value="CROSSOVER JUNCTION ENDODEOXYRIBONUCLEASE RUVC"/>
    <property type="match status" value="1"/>
</dbReference>
<dbReference type="Pfam" id="PF02075">
    <property type="entry name" value="RuvC"/>
    <property type="match status" value="1"/>
</dbReference>
<dbReference type="PRINTS" id="PR00696">
    <property type="entry name" value="RSOLVASERUVC"/>
</dbReference>
<dbReference type="SUPFAM" id="SSF53098">
    <property type="entry name" value="Ribonuclease H-like"/>
    <property type="match status" value="1"/>
</dbReference>
<dbReference type="PROSITE" id="PS01321">
    <property type="entry name" value="RUVC"/>
    <property type="match status" value="1"/>
</dbReference>
<evidence type="ECO:0000255" key="1">
    <source>
        <dbReference type="HAMAP-Rule" id="MF_00034"/>
    </source>
</evidence>
<feature type="chain" id="PRO_0000183154" description="Crossover junction endodeoxyribonuclease RuvC">
    <location>
        <begin position="1"/>
        <end position="173"/>
    </location>
</feature>
<feature type="active site" evidence="1">
    <location>
        <position position="8"/>
    </location>
</feature>
<feature type="active site" evidence="1">
    <location>
        <position position="67"/>
    </location>
</feature>
<feature type="active site" evidence="1">
    <location>
        <position position="139"/>
    </location>
</feature>
<feature type="binding site" evidence="1">
    <location>
        <position position="8"/>
    </location>
    <ligand>
        <name>Mg(2+)</name>
        <dbReference type="ChEBI" id="CHEBI:18420"/>
        <label>1</label>
    </ligand>
</feature>
<feature type="binding site" evidence="1">
    <location>
        <position position="67"/>
    </location>
    <ligand>
        <name>Mg(2+)</name>
        <dbReference type="ChEBI" id="CHEBI:18420"/>
        <label>2</label>
    </ligand>
</feature>
<feature type="binding site" evidence="1">
    <location>
        <position position="139"/>
    </location>
    <ligand>
        <name>Mg(2+)</name>
        <dbReference type="ChEBI" id="CHEBI:18420"/>
        <label>1</label>
    </ligand>
</feature>
<comment type="function">
    <text evidence="1">The RuvA-RuvB-RuvC complex processes Holliday junction (HJ) DNA during genetic recombination and DNA repair. Endonuclease that resolves HJ intermediates. Cleaves cruciform DNA by making single-stranded nicks across the HJ at symmetrical positions within the homologous arms, yielding a 5'-phosphate and a 3'-hydroxyl group; requires a central core of homology in the junction. The consensus cleavage sequence is 5'-(A/T)TT(C/G)-3'. Cleavage occurs on the 3'-side of the TT dinucleotide at the point of strand exchange. HJ branch migration catalyzed by RuvA-RuvB allows RuvC to scan DNA until it finds its consensus sequence, where it cleaves and resolves the cruciform DNA.</text>
</comment>
<comment type="catalytic activity">
    <reaction evidence="1">
        <text>Endonucleolytic cleavage at a junction such as a reciprocal single-stranded crossover between two homologous DNA duplexes (Holliday junction).</text>
        <dbReference type="EC" id="3.1.21.10"/>
    </reaction>
</comment>
<comment type="cofactor">
    <cofactor evidence="1">
        <name>Mg(2+)</name>
        <dbReference type="ChEBI" id="CHEBI:18420"/>
    </cofactor>
    <text evidence="1">Binds 2 Mg(2+) ion per subunit.</text>
</comment>
<comment type="subunit">
    <text evidence="1">Homodimer which binds Holliday junction (HJ) DNA. The HJ becomes 2-fold symmetrical on binding to RuvC with unstacked arms; it has a different conformation from HJ DNA in complex with RuvA. In the full resolvosome a probable DNA-RuvA(4)-RuvB(12)-RuvC(2) complex forms which resolves the HJ.</text>
</comment>
<comment type="subcellular location">
    <subcellularLocation>
        <location evidence="1">Cytoplasm</location>
    </subcellularLocation>
</comment>
<comment type="similarity">
    <text evidence="1">Belongs to the RuvC family.</text>
</comment>
<organism>
    <name type="scientific">Yersinia pestis</name>
    <dbReference type="NCBI Taxonomy" id="632"/>
    <lineage>
        <taxon>Bacteria</taxon>
        <taxon>Pseudomonadati</taxon>
        <taxon>Pseudomonadota</taxon>
        <taxon>Gammaproteobacteria</taxon>
        <taxon>Enterobacterales</taxon>
        <taxon>Yersiniaceae</taxon>
        <taxon>Yersinia</taxon>
    </lineage>
</organism>
<sequence length="173" mass="18641">MAIVLGIDPGSRVTGYGVIRQQGRQLTYLGSGCIRTVVDDMPTRLKLIYAGVTEIITQFQPDFFAIEQVFMAKNPDSALKLGQARGAAIVAAVNLNLPVSEYAARQVKQTVVGTGAAEKSQVQHMVRSLLKLPANPQADAADALAIAITHCHLSQNTLRLGNDQMTLSRGRIR</sequence>
<reference key="1">
    <citation type="journal article" date="2001" name="Nature">
        <title>Genome sequence of Yersinia pestis, the causative agent of plague.</title>
        <authorList>
            <person name="Parkhill J."/>
            <person name="Wren B.W."/>
            <person name="Thomson N.R."/>
            <person name="Titball R.W."/>
            <person name="Holden M.T.G."/>
            <person name="Prentice M.B."/>
            <person name="Sebaihia M."/>
            <person name="James K.D."/>
            <person name="Churcher C.M."/>
            <person name="Mungall K.L."/>
            <person name="Baker S."/>
            <person name="Basham D."/>
            <person name="Bentley S.D."/>
            <person name="Brooks K."/>
            <person name="Cerdeno-Tarraga A.-M."/>
            <person name="Chillingworth T."/>
            <person name="Cronin A."/>
            <person name="Davies R.M."/>
            <person name="Davis P."/>
            <person name="Dougan G."/>
            <person name="Feltwell T."/>
            <person name="Hamlin N."/>
            <person name="Holroyd S."/>
            <person name="Jagels K."/>
            <person name="Karlyshev A.V."/>
            <person name="Leather S."/>
            <person name="Moule S."/>
            <person name="Oyston P.C.F."/>
            <person name="Quail M.A."/>
            <person name="Rutherford K.M."/>
            <person name="Simmonds M."/>
            <person name="Skelton J."/>
            <person name="Stevens K."/>
            <person name="Whitehead S."/>
            <person name="Barrell B.G."/>
        </authorList>
    </citation>
    <scope>NUCLEOTIDE SEQUENCE [LARGE SCALE GENOMIC DNA]</scope>
    <source>
        <strain>CO-92 / Biovar Orientalis</strain>
    </source>
</reference>
<reference key="2">
    <citation type="journal article" date="2002" name="J. Bacteriol.">
        <title>Genome sequence of Yersinia pestis KIM.</title>
        <authorList>
            <person name="Deng W."/>
            <person name="Burland V."/>
            <person name="Plunkett G. III"/>
            <person name="Boutin A."/>
            <person name="Mayhew G.F."/>
            <person name="Liss P."/>
            <person name="Perna N.T."/>
            <person name="Rose D.J."/>
            <person name="Mau B."/>
            <person name="Zhou S."/>
            <person name="Schwartz D.C."/>
            <person name="Fetherston J.D."/>
            <person name="Lindler L.E."/>
            <person name="Brubaker R.R."/>
            <person name="Plano G.V."/>
            <person name="Straley S.C."/>
            <person name="McDonough K.A."/>
            <person name="Nilles M.L."/>
            <person name="Matson J.S."/>
            <person name="Blattner F.R."/>
            <person name="Perry R.D."/>
        </authorList>
    </citation>
    <scope>NUCLEOTIDE SEQUENCE [LARGE SCALE GENOMIC DNA]</scope>
    <source>
        <strain>KIM10+ / Biovar Mediaevalis</strain>
    </source>
</reference>
<reference key="3">
    <citation type="journal article" date="2004" name="DNA Res.">
        <title>Complete genome sequence of Yersinia pestis strain 91001, an isolate avirulent to humans.</title>
        <authorList>
            <person name="Song Y."/>
            <person name="Tong Z."/>
            <person name="Wang J."/>
            <person name="Wang L."/>
            <person name="Guo Z."/>
            <person name="Han Y."/>
            <person name="Zhang J."/>
            <person name="Pei D."/>
            <person name="Zhou D."/>
            <person name="Qin H."/>
            <person name="Pang X."/>
            <person name="Han Y."/>
            <person name="Zhai J."/>
            <person name="Li M."/>
            <person name="Cui B."/>
            <person name="Qi Z."/>
            <person name="Jin L."/>
            <person name="Dai R."/>
            <person name="Chen F."/>
            <person name="Li S."/>
            <person name="Ye C."/>
            <person name="Du Z."/>
            <person name="Lin W."/>
            <person name="Wang J."/>
            <person name="Yu J."/>
            <person name="Yang H."/>
            <person name="Wang J."/>
            <person name="Huang P."/>
            <person name="Yang R."/>
        </authorList>
    </citation>
    <scope>NUCLEOTIDE SEQUENCE [LARGE SCALE GENOMIC DNA]</scope>
    <source>
        <strain>91001 / Biovar Mediaevalis</strain>
    </source>
</reference>